<name>PK3_DICDI</name>
<dbReference type="EC" id="2.7.11.1"/>
<dbReference type="EMBL" id="AAFI02000085">
    <property type="protein sequence ID" value="EAL64355.1"/>
    <property type="molecule type" value="Genomic_DNA"/>
</dbReference>
<dbReference type="EMBL" id="M59746">
    <property type="protein sequence ID" value="AAA33188.1"/>
    <property type="molecule type" value="Genomic_DNA"/>
</dbReference>
<dbReference type="PIR" id="C38578">
    <property type="entry name" value="C38578"/>
</dbReference>
<dbReference type="RefSeq" id="XP_637858.1">
    <property type="nucleotide sequence ID" value="XM_632766.1"/>
</dbReference>
<dbReference type="SMR" id="P34102"/>
<dbReference type="FunCoup" id="P34102">
    <property type="interactions" value="16"/>
</dbReference>
<dbReference type="STRING" id="44689.P34102"/>
<dbReference type="PaxDb" id="44689-DDB0220130"/>
<dbReference type="EnsemblProtists" id="EAL64355">
    <property type="protein sequence ID" value="EAL64355"/>
    <property type="gene ID" value="DDB_G0286125"/>
</dbReference>
<dbReference type="GeneID" id="8625455"/>
<dbReference type="KEGG" id="ddi:DDB_G0286125"/>
<dbReference type="dictyBase" id="DDB_G0286125">
    <property type="gene designation" value="pkgC"/>
</dbReference>
<dbReference type="VEuPathDB" id="AmoebaDB:DDB_G0286125"/>
<dbReference type="eggNOG" id="KOG0598">
    <property type="taxonomic scope" value="Eukaryota"/>
</dbReference>
<dbReference type="HOGENOM" id="CLU_319439_0_0_1"/>
<dbReference type="InParanoid" id="P34102"/>
<dbReference type="OMA" id="HRYHFEA"/>
<dbReference type="PRO" id="PR:P34102"/>
<dbReference type="Proteomes" id="UP000002195">
    <property type="component" value="Chromosome 4"/>
</dbReference>
<dbReference type="GO" id="GO:0005737">
    <property type="term" value="C:cytoplasm"/>
    <property type="evidence" value="ECO:0000318"/>
    <property type="project" value="GO_Central"/>
</dbReference>
<dbReference type="GO" id="GO:0005634">
    <property type="term" value="C:nucleus"/>
    <property type="evidence" value="ECO:0000318"/>
    <property type="project" value="GO_Central"/>
</dbReference>
<dbReference type="GO" id="GO:0005524">
    <property type="term" value="F:ATP binding"/>
    <property type="evidence" value="ECO:0007669"/>
    <property type="project" value="UniProtKB-KW"/>
</dbReference>
<dbReference type="GO" id="GO:0106310">
    <property type="term" value="F:protein serine kinase activity"/>
    <property type="evidence" value="ECO:0007669"/>
    <property type="project" value="RHEA"/>
</dbReference>
<dbReference type="GO" id="GO:0004674">
    <property type="term" value="F:protein serine/threonine kinase activity"/>
    <property type="evidence" value="ECO:0000318"/>
    <property type="project" value="GO_Central"/>
</dbReference>
<dbReference type="CDD" id="cd05123">
    <property type="entry name" value="STKc_AGC"/>
    <property type="match status" value="1"/>
</dbReference>
<dbReference type="FunFam" id="1.10.510.10:FF:000210">
    <property type="entry name" value="Non-specific serine/threonine protein kinase"/>
    <property type="match status" value="1"/>
</dbReference>
<dbReference type="FunFam" id="3.30.200.20:FF:000524">
    <property type="entry name" value="Non-specific serine/threonine protein kinase"/>
    <property type="match status" value="1"/>
</dbReference>
<dbReference type="Gene3D" id="3.30.200.20">
    <property type="entry name" value="Phosphorylase Kinase, domain 1"/>
    <property type="match status" value="1"/>
</dbReference>
<dbReference type="Gene3D" id="1.10.510.10">
    <property type="entry name" value="Transferase(Phosphotransferase) domain 1"/>
    <property type="match status" value="1"/>
</dbReference>
<dbReference type="InterPro" id="IPR000961">
    <property type="entry name" value="AGC-kinase_C"/>
</dbReference>
<dbReference type="InterPro" id="IPR011009">
    <property type="entry name" value="Kinase-like_dom_sf"/>
</dbReference>
<dbReference type="InterPro" id="IPR000719">
    <property type="entry name" value="Prot_kinase_dom"/>
</dbReference>
<dbReference type="InterPro" id="IPR017441">
    <property type="entry name" value="Protein_kinase_ATP_BS"/>
</dbReference>
<dbReference type="InterPro" id="IPR008271">
    <property type="entry name" value="Ser/Thr_kinase_AS"/>
</dbReference>
<dbReference type="InterPro" id="IPR045270">
    <property type="entry name" value="STKc_AGC"/>
</dbReference>
<dbReference type="PANTHER" id="PTHR24351">
    <property type="entry name" value="RIBOSOMAL PROTEIN S6 KINASE"/>
    <property type="match status" value="1"/>
</dbReference>
<dbReference type="Pfam" id="PF00069">
    <property type="entry name" value="Pkinase"/>
    <property type="match status" value="1"/>
</dbReference>
<dbReference type="SMART" id="SM00220">
    <property type="entry name" value="S_TKc"/>
    <property type="match status" value="1"/>
</dbReference>
<dbReference type="SUPFAM" id="SSF56112">
    <property type="entry name" value="Protein kinase-like (PK-like)"/>
    <property type="match status" value="1"/>
</dbReference>
<dbReference type="PROSITE" id="PS51285">
    <property type="entry name" value="AGC_KINASE_CTER"/>
    <property type="match status" value="1"/>
</dbReference>
<dbReference type="PROSITE" id="PS00107">
    <property type="entry name" value="PROTEIN_KINASE_ATP"/>
    <property type="match status" value="1"/>
</dbReference>
<dbReference type="PROSITE" id="PS50011">
    <property type="entry name" value="PROTEIN_KINASE_DOM"/>
    <property type="match status" value="1"/>
</dbReference>
<dbReference type="PROSITE" id="PS00108">
    <property type="entry name" value="PROTEIN_KINASE_ST"/>
    <property type="match status" value="1"/>
</dbReference>
<gene>
    <name type="primary">pkgC</name>
    <name type="ORF">DDB_G0286125</name>
</gene>
<accession>P34102</accession>
<accession>Q54M90</accession>
<keyword id="KW-0067">ATP-binding</keyword>
<keyword id="KW-0418">Kinase</keyword>
<keyword id="KW-0547">Nucleotide-binding</keyword>
<keyword id="KW-0597">Phosphoprotein</keyword>
<keyword id="KW-1185">Reference proteome</keyword>
<keyword id="KW-0723">Serine/threonine-protein kinase</keyword>
<keyword id="KW-0808">Transferase</keyword>
<comment type="catalytic activity">
    <reaction>
        <text>L-seryl-[protein] + ATP = O-phospho-L-seryl-[protein] + ADP + H(+)</text>
        <dbReference type="Rhea" id="RHEA:17989"/>
        <dbReference type="Rhea" id="RHEA-COMP:9863"/>
        <dbReference type="Rhea" id="RHEA-COMP:11604"/>
        <dbReference type="ChEBI" id="CHEBI:15378"/>
        <dbReference type="ChEBI" id="CHEBI:29999"/>
        <dbReference type="ChEBI" id="CHEBI:30616"/>
        <dbReference type="ChEBI" id="CHEBI:83421"/>
        <dbReference type="ChEBI" id="CHEBI:456216"/>
        <dbReference type="EC" id="2.7.11.1"/>
    </reaction>
</comment>
<comment type="catalytic activity">
    <reaction>
        <text>L-threonyl-[protein] + ATP = O-phospho-L-threonyl-[protein] + ADP + H(+)</text>
        <dbReference type="Rhea" id="RHEA:46608"/>
        <dbReference type="Rhea" id="RHEA-COMP:11060"/>
        <dbReference type="Rhea" id="RHEA-COMP:11605"/>
        <dbReference type="ChEBI" id="CHEBI:15378"/>
        <dbReference type="ChEBI" id="CHEBI:30013"/>
        <dbReference type="ChEBI" id="CHEBI:30616"/>
        <dbReference type="ChEBI" id="CHEBI:61977"/>
        <dbReference type="ChEBI" id="CHEBI:456216"/>
        <dbReference type="EC" id="2.7.11.1"/>
    </reaction>
</comment>
<comment type="similarity">
    <text evidence="6">Belongs to the protein kinase superfamily. AGC Ser/Thr protein kinase family.</text>
</comment>
<feature type="chain" id="PRO_0000086548" description="Protein kinase 3">
    <location>
        <begin position="1"/>
        <end position="910"/>
    </location>
</feature>
<feature type="domain" description="Protein kinase" evidence="2">
    <location>
        <begin position="498"/>
        <end position="763"/>
    </location>
</feature>
<feature type="domain" description="AGC-kinase C-terminal" evidence="3">
    <location>
        <begin position="764"/>
        <end position="854"/>
    </location>
</feature>
<feature type="region of interest" description="Disordered" evidence="5">
    <location>
        <begin position="119"/>
        <end position="239"/>
    </location>
</feature>
<feature type="region of interest" description="Disordered" evidence="5">
    <location>
        <begin position="270"/>
        <end position="295"/>
    </location>
</feature>
<feature type="region of interest" description="Disordered" evidence="5">
    <location>
        <begin position="391"/>
        <end position="454"/>
    </location>
</feature>
<feature type="region of interest" description="Disordered" evidence="5">
    <location>
        <begin position="786"/>
        <end position="812"/>
    </location>
</feature>
<feature type="region of interest" description="Disordered" evidence="5">
    <location>
        <begin position="859"/>
        <end position="910"/>
    </location>
</feature>
<feature type="compositionally biased region" description="Gly residues" evidence="5">
    <location>
        <begin position="119"/>
        <end position="129"/>
    </location>
</feature>
<feature type="compositionally biased region" description="Low complexity" evidence="5">
    <location>
        <begin position="130"/>
        <end position="160"/>
    </location>
</feature>
<feature type="compositionally biased region" description="Low complexity" evidence="5">
    <location>
        <begin position="169"/>
        <end position="196"/>
    </location>
</feature>
<feature type="compositionally biased region" description="Low complexity" evidence="5">
    <location>
        <begin position="209"/>
        <end position="220"/>
    </location>
</feature>
<feature type="compositionally biased region" description="Low complexity" evidence="5">
    <location>
        <begin position="227"/>
        <end position="239"/>
    </location>
</feature>
<feature type="compositionally biased region" description="Low complexity" evidence="5">
    <location>
        <begin position="270"/>
        <end position="290"/>
    </location>
</feature>
<feature type="compositionally biased region" description="Low complexity" evidence="5">
    <location>
        <begin position="422"/>
        <end position="450"/>
    </location>
</feature>
<feature type="compositionally biased region" description="Low complexity" evidence="5">
    <location>
        <begin position="788"/>
        <end position="809"/>
    </location>
</feature>
<feature type="compositionally biased region" description="Low complexity" evidence="5">
    <location>
        <begin position="859"/>
        <end position="886"/>
    </location>
</feature>
<feature type="active site" description="Proton acceptor" evidence="2 4">
    <location>
        <position position="621"/>
    </location>
</feature>
<feature type="binding site" evidence="2">
    <location>
        <begin position="504"/>
        <end position="512"/>
    </location>
    <ligand>
        <name>ATP</name>
        <dbReference type="ChEBI" id="CHEBI:30616"/>
    </ligand>
</feature>
<feature type="binding site" evidence="2">
    <location>
        <position position="527"/>
    </location>
    <ligand>
        <name>ATP</name>
        <dbReference type="ChEBI" id="CHEBI:30616"/>
    </ligand>
</feature>
<feature type="modified residue" description="Phosphothreonine; by autocatalysis" evidence="1">
    <location>
        <position position="664"/>
    </location>
</feature>
<proteinExistence type="inferred from homology"/>
<evidence type="ECO:0000250" key="1"/>
<evidence type="ECO:0000255" key="2">
    <source>
        <dbReference type="PROSITE-ProRule" id="PRU00159"/>
    </source>
</evidence>
<evidence type="ECO:0000255" key="3">
    <source>
        <dbReference type="PROSITE-ProRule" id="PRU00618"/>
    </source>
</evidence>
<evidence type="ECO:0000255" key="4">
    <source>
        <dbReference type="PROSITE-ProRule" id="PRU10027"/>
    </source>
</evidence>
<evidence type="ECO:0000256" key="5">
    <source>
        <dbReference type="SAM" id="MobiDB-lite"/>
    </source>
</evidence>
<evidence type="ECO:0000305" key="6"/>
<protein>
    <recommendedName>
        <fullName>Protein kinase 3</fullName>
        <shortName>PK3</shortName>
        <ecNumber>2.7.11.1</ecNumber>
    </recommendedName>
</protein>
<sequence>MSFKKQTKTPTSWFPGLKKERDLSHHKERYCTQYDVIKVNAYGKRQQRTLAVSSLGVSNLNGQSCQWFVRNSDVYSIEQDPTDSHKFSLTFLHRYHFEAETPEQAKSIISEFKRLGVGSPSGGGGGGSGVSSNGSNSTATSPNTSPIRLYVSDPSNQPTSSSPPPQPPLSESVGVHRSSPMLSSSRMISQLSQSTSENNISSPTYHPQGLSGSSTSSSSASGGGGNNNNANNSTPPNLIASSASNSSLYSSSINSSGIINSSNNNSSISFNNNNNNNNSNLTTTTTTTSTFKTPTLPISQASKFNNESESMGLSPLTPNSNSQTALMQHINAMPNTPNSNSTEGSRVWKIRAEELKKQFLLKKSSKSTQTVATTTPTPITKADIKIVLDDNKDDKNKDNNIGSGGSGNSSSKINKEKDNPYINQPSSLPSNNNSNNNNITKSNSTTTSQTNDKKDVCSSTINFDNLEVSSSSDRDLSSSKSLNKKNKQSIKKLTIDDFELLKVLGVGSFGRVYLVRRKDTGKFYAMKVLNKKDMLKKKQIAHTNTEKMVLSTMDHPFIVRLHFAFQNEDFLFMCMDYVPGGELFHHLQKAGKFPEELAKFYIAEVICSLHYLHSNNIIYRDIKPENILLDEEGHIKLTDFGLSKSGITSVVGSKNGGEGGFATTFCGTPEYLAPEIITGAGHGKAADWWSVGILLFEMLTGRSPFLASNRNDMYKSMIQGNLRMPMFLSSDAQDLLEKLLVPDPNKRLGSTQGFEEISSHPFFELIPWRMLESKMITPPFKPTIKEISLPNSNSNSNNNSQQPTNNNLTLSCDPELNAKINFQRRKSSAASVYNLDSPFKNFSWNKEEEDGIMGERESIGSISSNNSISSSPTSSSPINNNNSGGSNTAGGHRILTRKSTIGKNLRKGSV</sequence>
<organism>
    <name type="scientific">Dictyostelium discoideum</name>
    <name type="common">Social amoeba</name>
    <dbReference type="NCBI Taxonomy" id="44689"/>
    <lineage>
        <taxon>Eukaryota</taxon>
        <taxon>Amoebozoa</taxon>
        <taxon>Evosea</taxon>
        <taxon>Eumycetozoa</taxon>
        <taxon>Dictyostelia</taxon>
        <taxon>Dictyosteliales</taxon>
        <taxon>Dictyosteliaceae</taxon>
        <taxon>Dictyostelium</taxon>
    </lineage>
</organism>
<reference key="1">
    <citation type="journal article" date="2005" name="Nature">
        <title>The genome of the social amoeba Dictyostelium discoideum.</title>
        <authorList>
            <person name="Eichinger L."/>
            <person name="Pachebat J.A."/>
            <person name="Gloeckner G."/>
            <person name="Rajandream M.A."/>
            <person name="Sucgang R."/>
            <person name="Berriman M."/>
            <person name="Song J."/>
            <person name="Olsen R."/>
            <person name="Szafranski K."/>
            <person name="Xu Q."/>
            <person name="Tunggal B."/>
            <person name="Kummerfeld S."/>
            <person name="Madera M."/>
            <person name="Konfortov B.A."/>
            <person name="Rivero F."/>
            <person name="Bankier A.T."/>
            <person name="Lehmann R."/>
            <person name="Hamlin N."/>
            <person name="Davies R."/>
            <person name="Gaudet P."/>
            <person name="Fey P."/>
            <person name="Pilcher K."/>
            <person name="Chen G."/>
            <person name="Saunders D."/>
            <person name="Sodergren E.J."/>
            <person name="Davis P."/>
            <person name="Kerhornou A."/>
            <person name="Nie X."/>
            <person name="Hall N."/>
            <person name="Anjard C."/>
            <person name="Hemphill L."/>
            <person name="Bason N."/>
            <person name="Farbrother P."/>
            <person name="Desany B."/>
            <person name="Just E."/>
            <person name="Morio T."/>
            <person name="Rost R."/>
            <person name="Churcher C.M."/>
            <person name="Cooper J."/>
            <person name="Haydock S."/>
            <person name="van Driessche N."/>
            <person name="Cronin A."/>
            <person name="Goodhead I."/>
            <person name="Muzny D.M."/>
            <person name="Mourier T."/>
            <person name="Pain A."/>
            <person name="Lu M."/>
            <person name="Harper D."/>
            <person name="Lindsay R."/>
            <person name="Hauser H."/>
            <person name="James K.D."/>
            <person name="Quiles M."/>
            <person name="Madan Babu M."/>
            <person name="Saito T."/>
            <person name="Buchrieser C."/>
            <person name="Wardroper A."/>
            <person name="Felder M."/>
            <person name="Thangavelu M."/>
            <person name="Johnson D."/>
            <person name="Knights A."/>
            <person name="Loulseged H."/>
            <person name="Mungall K.L."/>
            <person name="Oliver K."/>
            <person name="Price C."/>
            <person name="Quail M.A."/>
            <person name="Urushihara H."/>
            <person name="Hernandez J."/>
            <person name="Rabbinowitsch E."/>
            <person name="Steffen D."/>
            <person name="Sanders M."/>
            <person name="Ma J."/>
            <person name="Kohara Y."/>
            <person name="Sharp S."/>
            <person name="Simmonds M.N."/>
            <person name="Spiegler S."/>
            <person name="Tivey A."/>
            <person name="Sugano S."/>
            <person name="White B."/>
            <person name="Walker D."/>
            <person name="Woodward J.R."/>
            <person name="Winckler T."/>
            <person name="Tanaka Y."/>
            <person name="Shaulsky G."/>
            <person name="Schleicher M."/>
            <person name="Weinstock G.M."/>
            <person name="Rosenthal A."/>
            <person name="Cox E.C."/>
            <person name="Chisholm R.L."/>
            <person name="Gibbs R.A."/>
            <person name="Loomis W.F."/>
            <person name="Platzer M."/>
            <person name="Kay R.R."/>
            <person name="Williams J.G."/>
            <person name="Dear P.H."/>
            <person name="Noegel A.A."/>
            <person name="Barrell B.G."/>
            <person name="Kuspa A."/>
        </authorList>
    </citation>
    <scope>NUCLEOTIDE SEQUENCE [LARGE SCALE GENOMIC DNA]</scope>
    <source>
        <strain>AX4</strain>
    </source>
</reference>
<reference key="2">
    <citation type="journal article" date="1991" name="Proc. Natl. Acad. Sci. U.S.A.">
        <title>Identification of a protein kinase multigene family of Dictyostelium discoideum: molecular cloning and expression of a cDNA encoding a developmentally regulated protein kinase.</title>
        <authorList>
            <person name="Haribabu B."/>
            <person name="Dottin R.P."/>
        </authorList>
    </citation>
    <scope>NUCLEOTIDE SEQUENCE [GENOMIC DNA] OF 626-666</scope>
</reference>